<feature type="chain" id="PRO_0000061538" description="Cytochrome b">
    <location>
        <begin position="1"/>
        <end position="381"/>
    </location>
</feature>
<feature type="transmembrane region" description="Helical" evidence="2">
    <location>
        <begin position="33"/>
        <end position="53"/>
    </location>
</feature>
<feature type="transmembrane region" description="Helical" evidence="2">
    <location>
        <begin position="77"/>
        <end position="98"/>
    </location>
</feature>
<feature type="transmembrane region" description="Helical" evidence="2">
    <location>
        <begin position="113"/>
        <end position="133"/>
    </location>
</feature>
<feature type="transmembrane region" description="Helical" evidence="2">
    <location>
        <begin position="178"/>
        <end position="198"/>
    </location>
</feature>
<feature type="transmembrane region" description="Helical" evidence="2">
    <location>
        <begin position="226"/>
        <end position="246"/>
    </location>
</feature>
<feature type="transmembrane region" description="Helical" evidence="2">
    <location>
        <begin position="288"/>
        <end position="308"/>
    </location>
</feature>
<feature type="transmembrane region" description="Helical" evidence="2">
    <location>
        <begin position="320"/>
        <end position="340"/>
    </location>
</feature>
<feature type="transmembrane region" description="Helical" evidence="2">
    <location>
        <begin position="347"/>
        <end position="367"/>
    </location>
</feature>
<feature type="binding site" description="axial binding residue" evidence="2">
    <location>
        <position position="83"/>
    </location>
    <ligand>
        <name>heme b</name>
        <dbReference type="ChEBI" id="CHEBI:60344"/>
        <label>b562</label>
    </ligand>
    <ligandPart>
        <name>Fe</name>
        <dbReference type="ChEBI" id="CHEBI:18248"/>
    </ligandPart>
</feature>
<feature type="binding site" description="axial binding residue" evidence="2">
    <location>
        <position position="97"/>
    </location>
    <ligand>
        <name>heme b</name>
        <dbReference type="ChEBI" id="CHEBI:60344"/>
        <label>b566</label>
    </ligand>
    <ligandPart>
        <name>Fe</name>
        <dbReference type="ChEBI" id="CHEBI:18248"/>
    </ligandPart>
</feature>
<feature type="binding site" description="axial binding residue" evidence="2">
    <location>
        <position position="182"/>
    </location>
    <ligand>
        <name>heme b</name>
        <dbReference type="ChEBI" id="CHEBI:60344"/>
        <label>b562</label>
    </ligand>
    <ligandPart>
        <name>Fe</name>
        <dbReference type="ChEBI" id="CHEBI:18248"/>
    </ligandPart>
</feature>
<feature type="binding site" description="axial binding residue" evidence="2">
    <location>
        <position position="196"/>
    </location>
    <ligand>
        <name>heme b</name>
        <dbReference type="ChEBI" id="CHEBI:60344"/>
        <label>b566</label>
    </ligand>
    <ligandPart>
        <name>Fe</name>
        <dbReference type="ChEBI" id="CHEBI:18248"/>
    </ligandPart>
</feature>
<feature type="binding site" evidence="2">
    <location>
        <position position="201"/>
    </location>
    <ligand>
        <name>a ubiquinone</name>
        <dbReference type="ChEBI" id="CHEBI:16389"/>
    </ligand>
</feature>
<gene>
    <name type="primary">MT-CYB</name>
    <name type="synonym">COB</name>
    <name type="synonym">CYTB</name>
    <name type="synonym">MTCYB</name>
</gene>
<comment type="function">
    <text evidence="2">Component of the ubiquinol-cytochrome c reductase complex (complex III or cytochrome b-c1 complex) that is part of the mitochondrial respiratory chain. The b-c1 complex mediates electron transfer from ubiquinol to cytochrome c. Contributes to the generation of a proton gradient across the mitochondrial membrane that is then used for ATP synthesis.</text>
</comment>
<comment type="cofactor">
    <cofactor evidence="2">
        <name>heme b</name>
        <dbReference type="ChEBI" id="CHEBI:60344"/>
    </cofactor>
    <text evidence="2">Binds 2 heme b groups non-covalently.</text>
</comment>
<comment type="subunit">
    <text evidence="2">The cytochrome bc1 complex contains 11 subunits: 3 respiratory subunits (MT-CYB, CYC1 and UQCRFS1), 2 core proteins (UQCRC1 and UQCRC2) and 6 low-molecular weight proteins (UQCRH/QCR6, UQCRB/QCR7, UQCRQ/QCR8, UQCR10/QCR9, UQCR11/QCR10 and a cleavage product of UQCRFS1). This cytochrome bc1 complex then forms a dimer.</text>
</comment>
<comment type="subcellular location">
    <subcellularLocation>
        <location evidence="2">Mitochondrion inner membrane</location>
        <topology evidence="2">Multi-pass membrane protein</topology>
    </subcellularLocation>
</comment>
<comment type="miscellaneous">
    <text evidence="1">Heme 1 (or BL or b562) is low-potential and absorbs at about 562 nm, and heme 2 (or BH or b566) is high-potential and absorbs at about 566 nm.</text>
</comment>
<comment type="similarity">
    <text evidence="3 4">Belongs to the cytochrome b family.</text>
</comment>
<comment type="caution">
    <text evidence="2">The full-length protein contains only eight transmembrane helices, not nine as predicted by bioinformatics tools.</text>
</comment>
<proteinExistence type="inferred from homology"/>
<keyword id="KW-0249">Electron transport</keyword>
<keyword id="KW-0349">Heme</keyword>
<keyword id="KW-0408">Iron</keyword>
<keyword id="KW-0472">Membrane</keyword>
<keyword id="KW-0479">Metal-binding</keyword>
<keyword id="KW-0496">Mitochondrion</keyword>
<keyword id="KW-0999">Mitochondrion inner membrane</keyword>
<keyword id="KW-0679">Respiratory chain</keyword>
<keyword id="KW-0812">Transmembrane</keyword>
<keyword id="KW-1133">Transmembrane helix</keyword>
<keyword id="KW-0813">Transport</keyword>
<keyword id="KW-0830">Ubiquinone</keyword>
<accession>Q9XNU6</accession>
<evidence type="ECO:0000250" key="1"/>
<evidence type="ECO:0000250" key="2">
    <source>
        <dbReference type="UniProtKB" id="P00157"/>
    </source>
</evidence>
<evidence type="ECO:0000255" key="3">
    <source>
        <dbReference type="PROSITE-ProRule" id="PRU00967"/>
    </source>
</evidence>
<evidence type="ECO:0000255" key="4">
    <source>
        <dbReference type="PROSITE-ProRule" id="PRU00968"/>
    </source>
</evidence>
<sequence length="381" mass="42971">MTNXRNEXXLLKIINHSFIDLPTPSNISSWWNFGSLLGICLMIQILTGLFLAMHYTSDTATAFSSVTHICRDVNYGWLIRYLHANGASMFFICLFLHVGRGIYYGSFMLHETWNIGIVLFLTVMATAFVGYVLPWGQMSFWGATVITNLLSAIPYIGPTLVEWIWGGFSVDKATLTRFFAFHFILPFIITALVLVHLLFLHETGSNNPSGLNSDSDKIPFHPYYTIKDLLGVFILLMVLMFLVLFFPDILGDPDNYTPANPLNTPAHIKPEWYFLFAYAILRSIPNKLGGVLALILSILILAAFPLLNSSKQQGLVFRPITQILYWFLVANLVILTWIGGQPVEYPFTIIGQIASISYFSIIVILXPMASTIENNIMKIYQ</sequence>
<organism>
    <name type="scientific">Sigmodon hispidus</name>
    <name type="common">Hispid cotton rat</name>
    <dbReference type="NCBI Taxonomy" id="42415"/>
    <lineage>
        <taxon>Eukaryota</taxon>
        <taxon>Metazoa</taxon>
        <taxon>Chordata</taxon>
        <taxon>Craniata</taxon>
        <taxon>Vertebrata</taxon>
        <taxon>Euteleostomi</taxon>
        <taxon>Mammalia</taxon>
        <taxon>Eutheria</taxon>
        <taxon>Euarchontoglires</taxon>
        <taxon>Glires</taxon>
        <taxon>Rodentia</taxon>
        <taxon>Myomorpha</taxon>
        <taxon>Muroidea</taxon>
        <taxon>Cricetidae</taxon>
        <taxon>Sigmodontinae</taxon>
        <taxon>Sigmodon</taxon>
    </lineage>
</organism>
<protein>
    <recommendedName>
        <fullName>Cytochrome b</fullName>
    </recommendedName>
    <alternativeName>
        <fullName>Complex III subunit 3</fullName>
    </alternativeName>
    <alternativeName>
        <fullName>Complex III subunit III</fullName>
    </alternativeName>
    <alternativeName>
        <fullName>Cytochrome b-c1 complex subunit 3</fullName>
    </alternativeName>
    <alternativeName>
        <fullName>Ubiquinol-cytochrome-c reductase complex cytochrome b subunit</fullName>
    </alternativeName>
</protein>
<dbReference type="EMBL" id="AF108702">
    <property type="protein sequence ID" value="AAD45484.1"/>
    <property type="molecule type" value="Genomic_DNA"/>
</dbReference>
<dbReference type="GO" id="GO:0005743">
    <property type="term" value="C:mitochondrial inner membrane"/>
    <property type="evidence" value="ECO:0007669"/>
    <property type="project" value="UniProtKB-SubCell"/>
</dbReference>
<dbReference type="GO" id="GO:0045275">
    <property type="term" value="C:respiratory chain complex III"/>
    <property type="evidence" value="ECO:0007669"/>
    <property type="project" value="InterPro"/>
</dbReference>
<dbReference type="GO" id="GO:0046872">
    <property type="term" value="F:metal ion binding"/>
    <property type="evidence" value="ECO:0007669"/>
    <property type="project" value="UniProtKB-KW"/>
</dbReference>
<dbReference type="GO" id="GO:0008121">
    <property type="term" value="F:ubiquinol-cytochrome-c reductase activity"/>
    <property type="evidence" value="ECO:0007669"/>
    <property type="project" value="InterPro"/>
</dbReference>
<dbReference type="GO" id="GO:0006122">
    <property type="term" value="P:mitochondrial electron transport, ubiquinol to cytochrome c"/>
    <property type="evidence" value="ECO:0007669"/>
    <property type="project" value="TreeGrafter"/>
</dbReference>
<dbReference type="CDD" id="cd00290">
    <property type="entry name" value="cytochrome_b_C"/>
    <property type="match status" value="1"/>
</dbReference>
<dbReference type="CDD" id="cd00284">
    <property type="entry name" value="Cytochrome_b_N"/>
    <property type="match status" value="1"/>
</dbReference>
<dbReference type="FunFam" id="1.20.810.10:FF:000002">
    <property type="entry name" value="Cytochrome b"/>
    <property type="match status" value="1"/>
</dbReference>
<dbReference type="Gene3D" id="1.20.810.10">
    <property type="entry name" value="Cytochrome Bc1 Complex, Chain C"/>
    <property type="match status" value="1"/>
</dbReference>
<dbReference type="InterPro" id="IPR005798">
    <property type="entry name" value="Cyt_b/b6_C"/>
</dbReference>
<dbReference type="InterPro" id="IPR036150">
    <property type="entry name" value="Cyt_b/b6_C_sf"/>
</dbReference>
<dbReference type="InterPro" id="IPR005797">
    <property type="entry name" value="Cyt_b/b6_N"/>
</dbReference>
<dbReference type="InterPro" id="IPR027387">
    <property type="entry name" value="Cytb/b6-like_sf"/>
</dbReference>
<dbReference type="InterPro" id="IPR030689">
    <property type="entry name" value="Cytochrome_b"/>
</dbReference>
<dbReference type="InterPro" id="IPR048260">
    <property type="entry name" value="Cytochrome_b_C_euk/bac"/>
</dbReference>
<dbReference type="InterPro" id="IPR048259">
    <property type="entry name" value="Cytochrome_b_N_euk/bac"/>
</dbReference>
<dbReference type="InterPro" id="IPR016174">
    <property type="entry name" value="Di-haem_cyt_TM"/>
</dbReference>
<dbReference type="PANTHER" id="PTHR19271">
    <property type="entry name" value="CYTOCHROME B"/>
    <property type="match status" value="1"/>
</dbReference>
<dbReference type="PANTHER" id="PTHR19271:SF16">
    <property type="entry name" value="CYTOCHROME B"/>
    <property type="match status" value="1"/>
</dbReference>
<dbReference type="Pfam" id="PF00032">
    <property type="entry name" value="Cytochrom_B_C"/>
    <property type="match status" value="1"/>
</dbReference>
<dbReference type="Pfam" id="PF00033">
    <property type="entry name" value="Cytochrome_B"/>
    <property type="match status" value="1"/>
</dbReference>
<dbReference type="PIRSF" id="PIRSF038885">
    <property type="entry name" value="COB"/>
    <property type="match status" value="1"/>
</dbReference>
<dbReference type="SUPFAM" id="SSF81648">
    <property type="entry name" value="a domain/subunit of cytochrome bc1 complex (Ubiquinol-cytochrome c reductase)"/>
    <property type="match status" value="1"/>
</dbReference>
<dbReference type="SUPFAM" id="SSF81342">
    <property type="entry name" value="Transmembrane di-heme cytochromes"/>
    <property type="match status" value="1"/>
</dbReference>
<dbReference type="PROSITE" id="PS51003">
    <property type="entry name" value="CYTB_CTER"/>
    <property type="match status" value="1"/>
</dbReference>
<dbReference type="PROSITE" id="PS51002">
    <property type="entry name" value="CYTB_NTER"/>
    <property type="match status" value="1"/>
</dbReference>
<geneLocation type="mitochondrion"/>
<reference key="1">
    <citation type="journal article" date="1999" name="J. Mammal. Evol.">
        <title>Phylogenetic relationships and the radiation of sigmodontine rodents in South America: evidence from cytochrome b.</title>
        <authorList>
            <person name="Smith M.F."/>
            <person name="Patton J.L."/>
        </authorList>
    </citation>
    <scope>NUCLEOTIDE SEQUENCE [GENOMIC DNA]</scope>
</reference>
<name>CYB_SIGHI</name>